<protein>
    <recommendedName>
        <fullName evidence="4">Potassium channel toxin alpha-KTx 6.9</fullName>
    </recommendedName>
    <alternativeName>
        <fullName evidence="4">OcKTx4</fullName>
    </alternativeName>
</protein>
<feature type="signal peptide" evidence="2">
    <location>
        <begin position="1"/>
        <end position="23"/>
    </location>
</feature>
<feature type="chain" id="PRO_0000227034" description="Potassium channel toxin alpha-KTx 6.9">
    <location>
        <begin position="24"/>
        <end position="61"/>
    </location>
</feature>
<feature type="site" description="Basic residue of the functional dyad" evidence="1">
    <location>
        <position position="49"/>
    </location>
</feature>
<feature type="site" description="Aromatic residue of the functional dyad" evidence="1">
    <location>
        <position position="58"/>
    </location>
</feature>
<feature type="disulfide bond" evidence="3 7">
    <location>
        <begin position="29"/>
        <end position="50"/>
    </location>
</feature>
<feature type="disulfide bond" evidence="3 7">
    <location>
        <begin position="35"/>
        <end position="55"/>
    </location>
</feature>
<feature type="disulfide bond" evidence="3 7">
    <location>
        <begin position="39"/>
        <end position="57"/>
    </location>
</feature>
<feature type="disulfide bond" evidence="3 7">
    <location>
        <begin position="45"/>
        <end position="60"/>
    </location>
</feature>
<feature type="helix" evidence="8">
    <location>
        <begin position="32"/>
        <end position="34"/>
    </location>
</feature>
<feature type="helix" evidence="8">
    <location>
        <begin position="36"/>
        <end position="43"/>
    </location>
</feature>
<feature type="strand" evidence="8">
    <location>
        <begin position="48"/>
        <end position="51"/>
    </location>
</feature>
<feature type="strand" evidence="8">
    <location>
        <begin position="54"/>
        <end position="57"/>
    </location>
</feature>
<sequence length="61" mass="6589">MNAKFILLLLVVTTTTLLPDAKGAEIIRCSGTRECYAPCQKLTGCLNAKCMNKACKCYGCV</sequence>
<organism>
    <name type="scientific">Opistophthalmus carinatus</name>
    <name type="common">African yellow leg scorpion</name>
    <dbReference type="NCBI Taxonomy" id="190115"/>
    <lineage>
        <taxon>Eukaryota</taxon>
        <taxon>Metazoa</taxon>
        <taxon>Ecdysozoa</taxon>
        <taxon>Arthropoda</taxon>
        <taxon>Chelicerata</taxon>
        <taxon>Arachnida</taxon>
        <taxon>Scorpiones</taxon>
        <taxon>Iurida</taxon>
        <taxon>Scorpionoidea</taxon>
        <taxon>Scorpionidae</taxon>
        <taxon>Opistophthalminae</taxon>
        <taxon>Opistophthalmus</taxon>
    </lineage>
</organism>
<comment type="function">
    <text evidence="3">Inhibits Kv1.2/KCNA2 and Kv1.3/KCNA3 voltage-gated potassium channels (PubMed:29483648).</text>
</comment>
<comment type="subcellular location">
    <subcellularLocation>
        <location evidence="6">Secreted</location>
    </subcellularLocation>
</comment>
<comment type="tissue specificity">
    <text evidence="6">Expressed by the venom gland.</text>
</comment>
<comment type="domain">
    <text evidence="5">Has the structural arrangement of an alpha-helix connected to antiparallel beta-sheets by disulfide bonds (CS-alpha/beta).</text>
</comment>
<comment type="similarity">
    <text evidence="5">Belongs to the short scorpion toxin superfamily. Potassium channel inhibitor family. Alpha-KTx 06 subfamily.</text>
</comment>
<accession>Q6XLL6</accession>
<name>KAX69_OPICA</name>
<keyword id="KW-0002">3D-structure</keyword>
<keyword id="KW-1015">Disulfide bond</keyword>
<keyword id="KW-0872">Ion channel impairing toxin</keyword>
<keyword id="KW-0528">Neurotoxin</keyword>
<keyword id="KW-0632">Potassium channel impairing toxin</keyword>
<keyword id="KW-0964">Secreted</keyword>
<keyword id="KW-0732">Signal</keyword>
<keyword id="KW-0800">Toxin</keyword>
<keyword id="KW-1220">Voltage-gated potassium channel impairing toxin</keyword>
<proteinExistence type="evidence at protein level"/>
<reference key="1">
    <citation type="journal article" date="2004" name="Proteins">
        <title>Evolutionary trace analysis of scorpion toxins specific for K-channels.</title>
        <authorList>
            <person name="Zhu S.-Y."/>
            <person name="Huys I."/>
            <person name="Dyason K."/>
            <person name="Verdonck F."/>
            <person name="Tytgat J."/>
        </authorList>
    </citation>
    <scope>NUCLEOTIDE SEQUENCE [MRNA]</scope>
    <source>
        <tissue>Venom gland</tissue>
    </source>
</reference>
<reference key="2">
    <citation type="journal article" date="2018" name="Nat. Struct. Mol. Biol.">
        <title>Screening, large-scale production and structure-based classification of cystine-dense peptides.</title>
        <authorList>
            <person name="Correnti C.E."/>
            <person name="Gewe M.M."/>
            <person name="Mehlin C."/>
            <person name="Bandaranayake A.D."/>
            <person name="Johnsen W.A."/>
            <person name="Rupert P.B."/>
            <person name="Brusniak M.Y."/>
            <person name="Clarke M."/>
            <person name="Burke S.E."/>
            <person name="De Van Der Schueren W."/>
            <person name="Pilat K."/>
            <person name="Turnbaugh S.M."/>
            <person name="May D."/>
            <person name="Watson A."/>
            <person name="Chan M.K."/>
            <person name="Bahl C.D."/>
            <person name="Olson J.M."/>
            <person name="Strong R.K."/>
        </authorList>
    </citation>
    <scope>X-RAY CRYSTALLOGRAPHY (1.80 ANGSTROMS) OF 24-61</scope>
    <scope>SYNTHESIS OF 24-61</scope>
    <scope>DISULFIDE BONDS</scope>
</reference>
<dbReference type="EMBL" id="AY225782">
    <property type="protein sequence ID" value="AAP73820.1"/>
    <property type="molecule type" value="mRNA"/>
</dbReference>
<dbReference type="PDB" id="6AVD">
    <property type="method" value="X-ray"/>
    <property type="resolution" value="1.80 A"/>
    <property type="chains" value="A=24-61"/>
</dbReference>
<dbReference type="PDBsum" id="6AVD"/>
<dbReference type="SMR" id="Q6XLL6"/>
<dbReference type="GO" id="GO:0005576">
    <property type="term" value="C:extracellular region"/>
    <property type="evidence" value="ECO:0007669"/>
    <property type="project" value="UniProtKB-SubCell"/>
</dbReference>
<dbReference type="GO" id="GO:0008200">
    <property type="term" value="F:ion channel inhibitor activity"/>
    <property type="evidence" value="ECO:0007669"/>
    <property type="project" value="InterPro"/>
</dbReference>
<dbReference type="GO" id="GO:0015459">
    <property type="term" value="F:potassium channel regulator activity"/>
    <property type="evidence" value="ECO:0007669"/>
    <property type="project" value="UniProtKB-KW"/>
</dbReference>
<dbReference type="GO" id="GO:0090729">
    <property type="term" value="F:toxin activity"/>
    <property type="evidence" value="ECO:0007669"/>
    <property type="project" value="UniProtKB-KW"/>
</dbReference>
<dbReference type="Gene3D" id="3.30.30.10">
    <property type="entry name" value="Knottin, scorpion toxin-like"/>
    <property type="match status" value="1"/>
</dbReference>
<dbReference type="InterPro" id="IPR036574">
    <property type="entry name" value="Scorpion_toxin-like_sf"/>
</dbReference>
<dbReference type="InterPro" id="IPR001947">
    <property type="entry name" value="Scorpion_toxinS_K_inh"/>
</dbReference>
<dbReference type="Pfam" id="PF00451">
    <property type="entry name" value="Toxin_2"/>
    <property type="match status" value="1"/>
</dbReference>
<dbReference type="PRINTS" id="PR00286">
    <property type="entry name" value="CHARYBDTOXIN"/>
</dbReference>
<dbReference type="SUPFAM" id="SSF57095">
    <property type="entry name" value="Scorpion toxin-like"/>
    <property type="match status" value="1"/>
</dbReference>
<dbReference type="PROSITE" id="PS01138">
    <property type="entry name" value="SCORP_SHORT_TOXIN"/>
    <property type="match status" value="1"/>
</dbReference>
<evidence type="ECO:0000250" key="1">
    <source>
        <dbReference type="UniProtKB" id="Q10726"/>
    </source>
</evidence>
<evidence type="ECO:0000255" key="2"/>
<evidence type="ECO:0000269" key="3">
    <source>
    </source>
</evidence>
<evidence type="ECO:0000303" key="4">
    <source>
    </source>
</evidence>
<evidence type="ECO:0000305" key="5"/>
<evidence type="ECO:0000305" key="6">
    <source>
    </source>
</evidence>
<evidence type="ECO:0000312" key="7">
    <source>
        <dbReference type="PDB" id="6AVD"/>
    </source>
</evidence>
<evidence type="ECO:0007829" key="8">
    <source>
        <dbReference type="PDB" id="6AVD"/>
    </source>
</evidence>